<keyword id="KW-0963">Cytoplasm</keyword>
<keyword id="KW-1185">Reference proteome</keyword>
<keyword id="KW-0690">Ribosome biogenesis</keyword>
<feature type="chain" id="PRO_0000102661" description="Ribosome-binding factor A">
    <location>
        <begin position="1"/>
        <end position="116"/>
    </location>
</feature>
<sequence>MANYRDRRVGQEIMREVNDILNKRIRDPRVQGITITDVRVTGDLQQATIYYSLLSDLASEQQKAQQGLDKAKGLIRKELGQRLTLYKTPELIFERDESVQYGNHIDELIRKLNQGE</sequence>
<dbReference type="EMBL" id="AE016830">
    <property type="protein sequence ID" value="AAO81068.1"/>
    <property type="molecule type" value="Genomic_DNA"/>
</dbReference>
<dbReference type="RefSeq" id="NP_814998.1">
    <property type="nucleotide sequence ID" value="NC_004668.1"/>
</dbReference>
<dbReference type="RefSeq" id="WP_002360497.1">
    <property type="nucleotide sequence ID" value="NZ_KE136528.1"/>
</dbReference>
<dbReference type="SMR" id="Q835U7"/>
<dbReference type="STRING" id="226185.EF_1275"/>
<dbReference type="EnsemblBacteria" id="AAO81068">
    <property type="protein sequence ID" value="AAO81068"/>
    <property type="gene ID" value="EF_1275"/>
</dbReference>
<dbReference type="GeneID" id="60893660"/>
<dbReference type="KEGG" id="efa:EF1275"/>
<dbReference type="PATRIC" id="fig|226185.45.peg.2227"/>
<dbReference type="eggNOG" id="COG0858">
    <property type="taxonomic scope" value="Bacteria"/>
</dbReference>
<dbReference type="HOGENOM" id="CLU_089475_3_0_9"/>
<dbReference type="Proteomes" id="UP000001415">
    <property type="component" value="Chromosome"/>
</dbReference>
<dbReference type="GO" id="GO:0005829">
    <property type="term" value="C:cytosol"/>
    <property type="evidence" value="ECO:0007669"/>
    <property type="project" value="TreeGrafter"/>
</dbReference>
<dbReference type="GO" id="GO:0043024">
    <property type="term" value="F:ribosomal small subunit binding"/>
    <property type="evidence" value="ECO:0007669"/>
    <property type="project" value="TreeGrafter"/>
</dbReference>
<dbReference type="GO" id="GO:0030490">
    <property type="term" value="P:maturation of SSU-rRNA"/>
    <property type="evidence" value="ECO:0007669"/>
    <property type="project" value="UniProtKB-UniRule"/>
</dbReference>
<dbReference type="Gene3D" id="3.30.300.20">
    <property type="match status" value="1"/>
</dbReference>
<dbReference type="HAMAP" id="MF_00003">
    <property type="entry name" value="RbfA"/>
    <property type="match status" value="1"/>
</dbReference>
<dbReference type="InterPro" id="IPR015946">
    <property type="entry name" value="KH_dom-like_a/b"/>
</dbReference>
<dbReference type="InterPro" id="IPR000238">
    <property type="entry name" value="RbfA"/>
</dbReference>
<dbReference type="InterPro" id="IPR023799">
    <property type="entry name" value="RbfA_dom_sf"/>
</dbReference>
<dbReference type="InterPro" id="IPR020053">
    <property type="entry name" value="Ribosome-bd_factorA_CS"/>
</dbReference>
<dbReference type="NCBIfam" id="TIGR00082">
    <property type="entry name" value="rbfA"/>
    <property type="match status" value="1"/>
</dbReference>
<dbReference type="PANTHER" id="PTHR33515">
    <property type="entry name" value="RIBOSOME-BINDING FACTOR A, CHLOROPLASTIC-RELATED"/>
    <property type="match status" value="1"/>
</dbReference>
<dbReference type="PANTHER" id="PTHR33515:SF1">
    <property type="entry name" value="RIBOSOME-BINDING FACTOR A, CHLOROPLASTIC-RELATED"/>
    <property type="match status" value="1"/>
</dbReference>
<dbReference type="Pfam" id="PF02033">
    <property type="entry name" value="RBFA"/>
    <property type="match status" value="1"/>
</dbReference>
<dbReference type="SUPFAM" id="SSF89919">
    <property type="entry name" value="Ribosome-binding factor A, RbfA"/>
    <property type="match status" value="1"/>
</dbReference>
<dbReference type="PROSITE" id="PS01319">
    <property type="entry name" value="RBFA"/>
    <property type="match status" value="1"/>
</dbReference>
<evidence type="ECO:0000255" key="1">
    <source>
        <dbReference type="HAMAP-Rule" id="MF_00003"/>
    </source>
</evidence>
<gene>
    <name evidence="1" type="primary">rbfA</name>
    <name type="ordered locus">EF_1275</name>
</gene>
<comment type="function">
    <text evidence="1">One of several proteins that assist in the late maturation steps of the functional core of the 30S ribosomal subunit. Associates with free 30S ribosomal subunits (but not with 30S subunits that are part of 70S ribosomes or polysomes). Required for efficient processing of 16S rRNA. May interact with the 5'-terminal helix region of 16S rRNA.</text>
</comment>
<comment type="subunit">
    <text evidence="1">Monomer. Binds 30S ribosomal subunits, but not 50S ribosomal subunits or 70S ribosomes.</text>
</comment>
<comment type="subcellular location">
    <subcellularLocation>
        <location evidence="1">Cytoplasm</location>
    </subcellularLocation>
</comment>
<comment type="similarity">
    <text evidence="1">Belongs to the RbfA family.</text>
</comment>
<accession>Q835U7</accession>
<name>RBFA_ENTFA</name>
<protein>
    <recommendedName>
        <fullName evidence="1">Ribosome-binding factor A</fullName>
    </recommendedName>
</protein>
<proteinExistence type="inferred from homology"/>
<organism>
    <name type="scientific">Enterococcus faecalis (strain ATCC 700802 / V583)</name>
    <dbReference type="NCBI Taxonomy" id="226185"/>
    <lineage>
        <taxon>Bacteria</taxon>
        <taxon>Bacillati</taxon>
        <taxon>Bacillota</taxon>
        <taxon>Bacilli</taxon>
        <taxon>Lactobacillales</taxon>
        <taxon>Enterococcaceae</taxon>
        <taxon>Enterococcus</taxon>
    </lineage>
</organism>
<reference key="1">
    <citation type="journal article" date="2003" name="Science">
        <title>Role of mobile DNA in the evolution of vancomycin-resistant Enterococcus faecalis.</title>
        <authorList>
            <person name="Paulsen I.T."/>
            <person name="Banerjei L."/>
            <person name="Myers G.S.A."/>
            <person name="Nelson K.E."/>
            <person name="Seshadri R."/>
            <person name="Read T.D."/>
            <person name="Fouts D.E."/>
            <person name="Eisen J.A."/>
            <person name="Gill S.R."/>
            <person name="Heidelberg J.F."/>
            <person name="Tettelin H."/>
            <person name="Dodson R.J."/>
            <person name="Umayam L.A."/>
            <person name="Brinkac L.M."/>
            <person name="Beanan M.J."/>
            <person name="Daugherty S.C."/>
            <person name="DeBoy R.T."/>
            <person name="Durkin S.A."/>
            <person name="Kolonay J.F."/>
            <person name="Madupu R."/>
            <person name="Nelson W.C."/>
            <person name="Vamathevan J.J."/>
            <person name="Tran B."/>
            <person name="Upton J."/>
            <person name="Hansen T."/>
            <person name="Shetty J."/>
            <person name="Khouri H.M."/>
            <person name="Utterback T.R."/>
            <person name="Radune D."/>
            <person name="Ketchum K.A."/>
            <person name="Dougherty B.A."/>
            <person name="Fraser C.M."/>
        </authorList>
    </citation>
    <scope>NUCLEOTIDE SEQUENCE [LARGE SCALE GENOMIC DNA]</scope>
    <source>
        <strain>ATCC 700802 / V583</strain>
    </source>
</reference>